<organism>
    <name type="scientific">African swine fever virus (isolate Pig/Kenya/KEN-50/1950)</name>
    <name type="common">ASFV</name>
    <dbReference type="NCBI Taxonomy" id="561445"/>
    <lineage>
        <taxon>Viruses</taxon>
        <taxon>Varidnaviria</taxon>
        <taxon>Bamfordvirae</taxon>
        <taxon>Nucleocytoviricota</taxon>
        <taxon>Pokkesviricetes</taxon>
        <taxon>Asfuvirales</taxon>
        <taxon>Asfarviridae</taxon>
        <taxon>Asfivirus</taxon>
        <taxon>African swine fever virus</taxon>
    </lineage>
</organism>
<gene>
    <name type="ordered locus">Ken-151</name>
</gene>
<name>TFIIS_ASFK5</name>
<sequence>MKMHIARDSIVYLLNKHLQNTILTNKIEQECFLQADTPKKYLQYIKPFLINCMTKNITTDLVMKDSKRLEPYITLEMRDIIQMMFFRTLQKHTFFRENTNLCTEYVQKIEASCYHYTYQQQEKTFLEEYSTRCGMINHIINCEKKSHQQQDNDALNKLISGELKPEAIGSMTFAELCPSAALKEKTEITLRSQQKVAEKTSQLYKCPNCKQRMCTYREVQTRALDEPSTIYCTCKKCGHEFIG</sequence>
<dbReference type="EMBL" id="AY261360">
    <property type="status" value="NOT_ANNOTATED_CDS"/>
    <property type="molecule type" value="Genomic_DNA"/>
</dbReference>
<dbReference type="Proteomes" id="UP000000861">
    <property type="component" value="Segment"/>
</dbReference>
<dbReference type="GO" id="GO:0003676">
    <property type="term" value="F:nucleic acid binding"/>
    <property type="evidence" value="ECO:0007669"/>
    <property type="project" value="InterPro"/>
</dbReference>
<dbReference type="GO" id="GO:0008270">
    <property type="term" value="F:zinc ion binding"/>
    <property type="evidence" value="ECO:0007669"/>
    <property type="project" value="UniProtKB-KW"/>
</dbReference>
<dbReference type="GO" id="GO:0006351">
    <property type="term" value="P:DNA-templated transcription"/>
    <property type="evidence" value="ECO:0007669"/>
    <property type="project" value="InterPro"/>
</dbReference>
<dbReference type="Gene3D" id="2.20.25.10">
    <property type="match status" value="1"/>
</dbReference>
<dbReference type="InterPro" id="IPR035100">
    <property type="entry name" value="TF_IIS-typ"/>
</dbReference>
<dbReference type="InterPro" id="IPR003618">
    <property type="entry name" value="TFIIS_cen_dom"/>
</dbReference>
<dbReference type="InterPro" id="IPR001222">
    <property type="entry name" value="Znf_TFIIS"/>
</dbReference>
<dbReference type="Pfam" id="PF01096">
    <property type="entry name" value="Zn_ribbon_TFIIS"/>
    <property type="match status" value="1"/>
</dbReference>
<dbReference type="PIRSF" id="PIRSF006704">
    <property type="entry name" value="TF_IIS"/>
    <property type="match status" value="1"/>
</dbReference>
<dbReference type="SMART" id="SM00510">
    <property type="entry name" value="TFS2M"/>
    <property type="match status" value="1"/>
</dbReference>
<dbReference type="SMART" id="SM00440">
    <property type="entry name" value="ZnF_C2C2"/>
    <property type="match status" value="1"/>
</dbReference>
<dbReference type="SUPFAM" id="SSF57783">
    <property type="entry name" value="Zinc beta-ribbon"/>
    <property type="match status" value="1"/>
</dbReference>
<dbReference type="PROSITE" id="PS51321">
    <property type="entry name" value="TFIIS_CENTRAL"/>
    <property type="match status" value="1"/>
</dbReference>
<dbReference type="PROSITE" id="PS00466">
    <property type="entry name" value="ZF_TFIIS_1"/>
    <property type="match status" value="1"/>
</dbReference>
<dbReference type="PROSITE" id="PS51133">
    <property type="entry name" value="ZF_TFIIS_2"/>
    <property type="match status" value="1"/>
</dbReference>
<protein>
    <recommendedName>
        <fullName evidence="2">Transcription factor TFIIS homolog</fullName>
    </recommendedName>
</protein>
<keyword id="KW-0426">Late protein</keyword>
<keyword id="KW-0479">Metal-binding</keyword>
<keyword id="KW-0804">Transcription</keyword>
<keyword id="KW-0805">Transcription regulation</keyword>
<keyword id="KW-0862">Zinc</keyword>
<keyword id="KW-0863">Zinc-finger</keyword>
<comment type="function">
    <text evidence="1">Putative initiation factor. Necessary for efficient transcription elongation past template-encoded arresting sites.</text>
</comment>
<comment type="similarity">
    <text evidence="5">Belongs to the TFS-II family.</text>
</comment>
<organismHost>
    <name type="scientific">Ornithodoros</name>
    <name type="common">relapsing fever ticks</name>
    <dbReference type="NCBI Taxonomy" id="6937"/>
</organismHost>
<organismHost>
    <name type="scientific">Phacochoerus aethiopicus</name>
    <name type="common">Warthog</name>
    <dbReference type="NCBI Taxonomy" id="85517"/>
</organismHost>
<organismHost>
    <name type="scientific">Phacochoerus africanus</name>
    <name type="common">Warthog</name>
    <dbReference type="NCBI Taxonomy" id="41426"/>
</organismHost>
<organismHost>
    <name type="scientific">Potamochoerus larvatus</name>
    <name type="common">Bushpig</name>
    <dbReference type="NCBI Taxonomy" id="273792"/>
</organismHost>
<organismHost>
    <name type="scientific">Sus scrofa</name>
    <name type="common">Pig</name>
    <dbReference type="NCBI Taxonomy" id="9823"/>
</organismHost>
<reference key="1">
    <citation type="submission" date="2003-03" db="EMBL/GenBank/DDBJ databases">
        <title>African swine fever virus genomes.</title>
        <authorList>
            <person name="Kutish G.F."/>
            <person name="Rock D.L."/>
        </authorList>
    </citation>
    <scope>NUCLEOTIDE SEQUENCE [LARGE SCALE GENOMIC DNA]</scope>
</reference>
<accession>P0C8F5</accession>
<proteinExistence type="inferred from homology"/>
<evidence type="ECO:0000250" key="1">
    <source>
        <dbReference type="UniProtKB" id="P07273"/>
    </source>
</evidence>
<evidence type="ECO:0000250" key="2">
    <source>
        <dbReference type="UniProtKB" id="P27948"/>
    </source>
</evidence>
<evidence type="ECO:0000255" key="3">
    <source>
        <dbReference type="PROSITE-ProRule" id="PRU00472"/>
    </source>
</evidence>
<evidence type="ECO:0000255" key="4">
    <source>
        <dbReference type="PROSITE-ProRule" id="PRU00651"/>
    </source>
</evidence>
<evidence type="ECO:0000305" key="5"/>
<feature type="chain" id="PRO_0000355060" description="Transcription factor TFIIS homolog">
    <location>
        <begin position="1"/>
        <end position="243"/>
    </location>
</feature>
<feature type="domain" description="TFIIS central" evidence="4">
    <location>
        <begin position="77"/>
        <end position="201"/>
    </location>
</feature>
<feature type="zinc finger region" description="TFIIS-type" evidence="3">
    <location>
        <begin position="202"/>
        <end position="242"/>
    </location>
</feature>
<feature type="binding site" evidence="3">
    <location>
        <position position="206"/>
    </location>
    <ligand>
        <name>Zn(2+)</name>
        <dbReference type="ChEBI" id="CHEBI:29105"/>
    </ligand>
</feature>
<feature type="binding site" evidence="3">
    <location>
        <position position="209"/>
    </location>
    <ligand>
        <name>Zn(2+)</name>
        <dbReference type="ChEBI" id="CHEBI:29105"/>
    </ligand>
</feature>
<feature type="binding site" evidence="3">
    <location>
        <position position="234"/>
    </location>
    <ligand>
        <name>Zn(2+)</name>
        <dbReference type="ChEBI" id="CHEBI:29105"/>
    </ligand>
</feature>
<feature type="binding site" evidence="3">
    <location>
        <position position="237"/>
    </location>
    <ligand>
        <name>Zn(2+)</name>
        <dbReference type="ChEBI" id="CHEBI:29105"/>
    </ligand>
</feature>